<accession>O84393</accession>
<dbReference type="EMBL" id="AE001273">
    <property type="protein sequence ID" value="AAC67985.1"/>
    <property type="molecule type" value="Genomic_DNA"/>
</dbReference>
<dbReference type="PIR" id="B71520">
    <property type="entry name" value="B71520"/>
</dbReference>
<dbReference type="RefSeq" id="NP_219898.3">
    <property type="nucleotide sequence ID" value="NC_000117.1"/>
</dbReference>
<dbReference type="RefSeq" id="WP_009871740.1">
    <property type="nucleotide sequence ID" value="NC_000117.1"/>
</dbReference>
<dbReference type="SMR" id="O84393"/>
<dbReference type="EnsemblBacteria" id="AAC67985">
    <property type="protein sequence ID" value="AAC67985"/>
    <property type="gene ID" value="CT_388"/>
</dbReference>
<dbReference type="GeneID" id="884729"/>
<dbReference type="KEGG" id="ctr:CT_388"/>
<dbReference type="PATRIC" id="fig|272561.5.peg.418"/>
<dbReference type="HOGENOM" id="CLU_130694_6_2_0"/>
<dbReference type="InParanoid" id="O84393"/>
<dbReference type="OrthoDB" id="9800587at2"/>
<dbReference type="Proteomes" id="UP000000431">
    <property type="component" value="Chromosome"/>
</dbReference>
<dbReference type="GO" id="GO:0005737">
    <property type="term" value="C:cytoplasm"/>
    <property type="evidence" value="ECO:0000318"/>
    <property type="project" value="GO_Central"/>
</dbReference>
<dbReference type="Gene3D" id="3.30.1200.10">
    <property type="entry name" value="YggU-like"/>
    <property type="match status" value="1"/>
</dbReference>
<dbReference type="HAMAP" id="MF_00634">
    <property type="entry name" value="UPF0235"/>
    <property type="match status" value="1"/>
</dbReference>
<dbReference type="InterPro" id="IPR003746">
    <property type="entry name" value="DUF167"/>
</dbReference>
<dbReference type="InterPro" id="IPR036591">
    <property type="entry name" value="YggU-like_sf"/>
</dbReference>
<dbReference type="NCBIfam" id="TIGR00251">
    <property type="entry name" value="DUF167 family protein"/>
    <property type="match status" value="1"/>
</dbReference>
<dbReference type="NCBIfam" id="NF001887">
    <property type="entry name" value="PRK00647.1"/>
    <property type="match status" value="1"/>
</dbReference>
<dbReference type="PANTHER" id="PTHR13420">
    <property type="entry name" value="UPF0235 PROTEIN C15ORF40"/>
    <property type="match status" value="1"/>
</dbReference>
<dbReference type="PANTHER" id="PTHR13420:SF7">
    <property type="entry name" value="UPF0235 PROTEIN C15ORF40"/>
    <property type="match status" value="1"/>
</dbReference>
<dbReference type="Pfam" id="PF02594">
    <property type="entry name" value="DUF167"/>
    <property type="match status" value="1"/>
</dbReference>
<dbReference type="SMART" id="SM01152">
    <property type="entry name" value="DUF167"/>
    <property type="match status" value="1"/>
</dbReference>
<dbReference type="SUPFAM" id="SSF69786">
    <property type="entry name" value="YggU-like"/>
    <property type="match status" value="1"/>
</dbReference>
<feature type="chain" id="PRO_0000139440" description="UPF0235 protein CT_388">
    <location>
        <begin position="1"/>
        <end position="115"/>
    </location>
</feature>
<keyword id="KW-1185">Reference proteome</keyword>
<reference key="1">
    <citation type="journal article" date="1998" name="Science">
        <title>Genome sequence of an obligate intracellular pathogen of humans: Chlamydia trachomatis.</title>
        <authorList>
            <person name="Stephens R.S."/>
            <person name="Kalman S."/>
            <person name="Lammel C.J."/>
            <person name="Fan J."/>
            <person name="Marathe R."/>
            <person name="Aravind L."/>
            <person name="Mitchell W.P."/>
            <person name="Olinger L."/>
            <person name="Tatusov R.L."/>
            <person name="Zhao Q."/>
            <person name="Koonin E.V."/>
            <person name="Davis R.W."/>
        </authorList>
    </citation>
    <scope>NUCLEOTIDE SEQUENCE [LARGE SCALE GENOMIC DNA]</scope>
    <source>
        <strain>ATCC VR-885 / DSM 19411 / UW-3/Cx</strain>
    </source>
</reference>
<proteinExistence type="inferred from homology"/>
<sequence length="115" mass="12867">MRFLLKLLSKEKENILLEGFWVLEVRVTTKARENRVVCLEDGILRVRVTEVPEKGKANDAVVALLANFLSIPKSDVTLIAGEASRRKKVLLPRSIKAFLLEQFPSESSSTTGKKS</sequence>
<evidence type="ECO:0000255" key="1">
    <source>
        <dbReference type="HAMAP-Rule" id="MF_00634"/>
    </source>
</evidence>
<name>Y388_CHLTR</name>
<comment type="similarity">
    <text evidence="1">Belongs to the UPF0235 family.</text>
</comment>
<gene>
    <name type="ordered locus">CT_388</name>
</gene>
<protein>
    <recommendedName>
        <fullName evidence="1">UPF0235 protein CT_388</fullName>
    </recommendedName>
</protein>
<organism>
    <name type="scientific">Chlamydia trachomatis serovar D (strain ATCC VR-885 / DSM 19411 / UW-3/Cx)</name>
    <dbReference type="NCBI Taxonomy" id="272561"/>
    <lineage>
        <taxon>Bacteria</taxon>
        <taxon>Pseudomonadati</taxon>
        <taxon>Chlamydiota</taxon>
        <taxon>Chlamydiia</taxon>
        <taxon>Chlamydiales</taxon>
        <taxon>Chlamydiaceae</taxon>
        <taxon>Chlamydia/Chlamydophila group</taxon>
        <taxon>Chlamydia</taxon>
    </lineage>
</organism>